<sequence>MADNPVLEQLLRRLEVADGGLDSAELATQLGVEHQAVVGAVKSLQALGEVIEAELRSTKCWELTTEGEEIAREGSHEARVFRSIPLEGLVQSELMQLPSGKVGFSKAMSNKWIRVDKSAADGPRVFRVVDSIEDEVQRRLQQVQAGQAEKLAEKERNELRKRKLLTEVILKTYWVSKGKGFSTSVSKQEAELSPEMISSGSWRDRPFKPYNFSARGVLPDSGHLHPLLKVRSQFRQIFLEMGFTEMPTDNFIESSFWNFDALFQPQQHPARDQHDTFFLRDPAEALQLPMDYVQRVKRTHSQGGYGSQGYKYTWKLEEARKNLLRTHTTAASARALYRLAQKKPFTPAKYFSIDRVFRNETLDATHLAEFHQIEGVIADHGLTLGHLMGVLREFFTKLGITQLRFKPAYNPYTEPSMEVFSYHQGLKKWVEVGNSGVFRPEMLLPMGLPENVSVIAWGLSLERPTMIKYGINNIRELVGHKVNLQMVYDSPVCRLDIEPRSSKTQEAA</sequence>
<evidence type="ECO:0000250" key="1">
    <source>
        <dbReference type="UniProtKB" id="A5K9S0"/>
    </source>
</evidence>
<evidence type="ECO:0000250" key="2">
    <source>
        <dbReference type="UniProtKB" id="Q8C0C7"/>
    </source>
</evidence>
<evidence type="ECO:0000250" key="3">
    <source>
        <dbReference type="UniProtKB" id="Q9Y285"/>
    </source>
</evidence>
<evidence type="ECO:0000269" key="4">
    <source>
    </source>
</evidence>
<evidence type="ECO:0000305" key="5"/>
<name>SYFA_RAT</name>
<proteinExistence type="evidence at protein level"/>
<accession>Q505J8</accession>
<dbReference type="EC" id="6.1.1.20" evidence="3"/>
<dbReference type="EMBL" id="BC094515">
    <property type="protein sequence ID" value="AAH94515.1"/>
    <property type="molecule type" value="mRNA"/>
</dbReference>
<dbReference type="RefSeq" id="NP_001019408.1">
    <property type="nucleotide sequence ID" value="NM_001024237.2"/>
</dbReference>
<dbReference type="SMR" id="Q505J8"/>
<dbReference type="BioGRID" id="252747">
    <property type="interactions" value="1"/>
</dbReference>
<dbReference type="FunCoup" id="Q505J8">
    <property type="interactions" value="2148"/>
</dbReference>
<dbReference type="IntAct" id="Q505J8">
    <property type="interactions" value="1"/>
</dbReference>
<dbReference type="MINT" id="Q505J8"/>
<dbReference type="STRING" id="10116.ENSRNOP00000004370"/>
<dbReference type="iPTMnet" id="Q505J8"/>
<dbReference type="PhosphoSitePlus" id="Q505J8"/>
<dbReference type="jPOST" id="Q505J8"/>
<dbReference type="PaxDb" id="10116-ENSRNOP00000004370"/>
<dbReference type="Ensembl" id="ENSRNOT00000004370.8">
    <property type="protein sequence ID" value="ENSRNOP00000004370.4"/>
    <property type="gene ID" value="ENSRNOG00000003149.8"/>
</dbReference>
<dbReference type="GeneID" id="288917"/>
<dbReference type="KEGG" id="rno:288917"/>
<dbReference type="AGR" id="RGD:1310314"/>
<dbReference type="CTD" id="2193"/>
<dbReference type="RGD" id="1310314">
    <property type="gene designation" value="Farsa"/>
</dbReference>
<dbReference type="eggNOG" id="KOG2784">
    <property type="taxonomic scope" value="Eukaryota"/>
</dbReference>
<dbReference type="GeneTree" id="ENSGT00390000006387"/>
<dbReference type="HOGENOM" id="CLU_025086_2_2_1"/>
<dbReference type="InParanoid" id="Q505J8"/>
<dbReference type="OrthoDB" id="238316at2759"/>
<dbReference type="PhylomeDB" id="Q505J8"/>
<dbReference type="TreeFam" id="TF300647"/>
<dbReference type="PRO" id="PR:Q505J8"/>
<dbReference type="Proteomes" id="UP000002494">
    <property type="component" value="Chromosome 19"/>
</dbReference>
<dbReference type="Bgee" id="ENSRNOG00000003149">
    <property type="expression patterns" value="Expressed in thymus and 20 other cell types or tissues"/>
</dbReference>
<dbReference type="GO" id="GO:0005737">
    <property type="term" value="C:cytoplasm"/>
    <property type="evidence" value="ECO:0000314"/>
    <property type="project" value="UniProtKB"/>
</dbReference>
<dbReference type="GO" id="GO:0009328">
    <property type="term" value="C:phenylalanine-tRNA ligase complex"/>
    <property type="evidence" value="ECO:0000250"/>
    <property type="project" value="UniProtKB"/>
</dbReference>
<dbReference type="GO" id="GO:0005524">
    <property type="term" value="F:ATP binding"/>
    <property type="evidence" value="ECO:0007669"/>
    <property type="project" value="UniProtKB-KW"/>
</dbReference>
<dbReference type="GO" id="GO:0000287">
    <property type="term" value="F:magnesium ion binding"/>
    <property type="evidence" value="ECO:0000250"/>
    <property type="project" value="UniProtKB"/>
</dbReference>
<dbReference type="GO" id="GO:0004826">
    <property type="term" value="F:phenylalanine-tRNA ligase activity"/>
    <property type="evidence" value="ECO:0000250"/>
    <property type="project" value="UniProtKB"/>
</dbReference>
<dbReference type="GO" id="GO:0000049">
    <property type="term" value="F:tRNA binding"/>
    <property type="evidence" value="ECO:0007669"/>
    <property type="project" value="InterPro"/>
</dbReference>
<dbReference type="GO" id="GO:0006432">
    <property type="term" value="P:phenylalanyl-tRNA aminoacylation"/>
    <property type="evidence" value="ECO:0000250"/>
    <property type="project" value="UniProtKB"/>
</dbReference>
<dbReference type="GO" id="GO:0051290">
    <property type="term" value="P:protein heterotetramerization"/>
    <property type="evidence" value="ECO:0000250"/>
    <property type="project" value="UniProtKB"/>
</dbReference>
<dbReference type="CDD" id="cd00496">
    <property type="entry name" value="PheRS_alpha_core"/>
    <property type="match status" value="1"/>
</dbReference>
<dbReference type="FunFam" id="1.10.10.2320:FF:000001">
    <property type="entry name" value="phenylalanine--tRNA ligase alpha subunit"/>
    <property type="match status" value="1"/>
</dbReference>
<dbReference type="FunFam" id="1.10.10.2330:FF:000001">
    <property type="entry name" value="phenylalanine--tRNA ligase alpha subunit"/>
    <property type="match status" value="1"/>
</dbReference>
<dbReference type="FunFam" id="3.30.1370.240:FF:000002">
    <property type="entry name" value="phenylalanine--tRNA ligase alpha subunit"/>
    <property type="match status" value="1"/>
</dbReference>
<dbReference type="FunFam" id="3.30.930.10:FF:000036">
    <property type="entry name" value="phenylalanine--tRNA ligase alpha subunit"/>
    <property type="match status" value="1"/>
</dbReference>
<dbReference type="Gene3D" id="1.10.10.2320">
    <property type="match status" value="1"/>
</dbReference>
<dbReference type="Gene3D" id="1.10.10.2330">
    <property type="match status" value="1"/>
</dbReference>
<dbReference type="Gene3D" id="3.30.1370.240">
    <property type="match status" value="1"/>
</dbReference>
<dbReference type="Gene3D" id="3.30.930.10">
    <property type="entry name" value="Bira Bifunctional Protein, Domain 2"/>
    <property type="match status" value="1"/>
</dbReference>
<dbReference type="InterPro" id="IPR006195">
    <property type="entry name" value="aa-tRNA-synth_II"/>
</dbReference>
<dbReference type="InterPro" id="IPR045864">
    <property type="entry name" value="aa-tRNA-synth_II/BPL/LPL"/>
</dbReference>
<dbReference type="InterPro" id="IPR004529">
    <property type="entry name" value="Phe-tRNA-synth_IIc_asu"/>
</dbReference>
<dbReference type="InterPro" id="IPR002319">
    <property type="entry name" value="Phenylalanyl-tRNA_Synthase"/>
</dbReference>
<dbReference type="InterPro" id="IPR040724">
    <property type="entry name" value="PheRS_DBD1"/>
</dbReference>
<dbReference type="InterPro" id="IPR040586">
    <property type="entry name" value="PheRS_DBD2"/>
</dbReference>
<dbReference type="InterPro" id="IPR040725">
    <property type="entry name" value="PheRS_DBD3"/>
</dbReference>
<dbReference type="InterPro" id="IPR036390">
    <property type="entry name" value="WH_DNA-bd_sf"/>
</dbReference>
<dbReference type="NCBIfam" id="TIGR00468">
    <property type="entry name" value="pheS"/>
    <property type="match status" value="1"/>
</dbReference>
<dbReference type="NCBIfam" id="NF003210">
    <property type="entry name" value="PRK04172.1"/>
    <property type="match status" value="1"/>
</dbReference>
<dbReference type="PANTHER" id="PTHR11538:SF40">
    <property type="entry name" value="PHENYLALANINE--TRNA LIGASE ALPHA SUBUNIT"/>
    <property type="match status" value="1"/>
</dbReference>
<dbReference type="PANTHER" id="PTHR11538">
    <property type="entry name" value="PHENYLALANYL-TRNA SYNTHETASE"/>
    <property type="match status" value="1"/>
</dbReference>
<dbReference type="Pfam" id="PF18552">
    <property type="entry name" value="PheRS_DBD1"/>
    <property type="match status" value="1"/>
</dbReference>
<dbReference type="Pfam" id="PF18554">
    <property type="entry name" value="PheRS_DBD2"/>
    <property type="match status" value="1"/>
</dbReference>
<dbReference type="Pfam" id="PF18553">
    <property type="entry name" value="PheRS_DBD3"/>
    <property type="match status" value="1"/>
</dbReference>
<dbReference type="Pfam" id="PF01409">
    <property type="entry name" value="tRNA-synt_2d"/>
    <property type="match status" value="1"/>
</dbReference>
<dbReference type="SUPFAM" id="SSF55681">
    <property type="entry name" value="Class II aaRS and biotin synthetases"/>
    <property type="match status" value="1"/>
</dbReference>
<dbReference type="SUPFAM" id="SSF46785">
    <property type="entry name" value="Winged helix' DNA-binding domain"/>
    <property type="match status" value="1"/>
</dbReference>
<dbReference type="PROSITE" id="PS50862">
    <property type="entry name" value="AA_TRNA_LIGASE_II"/>
    <property type="match status" value="1"/>
</dbReference>
<comment type="catalytic activity">
    <reaction evidence="3">
        <text>tRNA(Phe) + L-phenylalanine + ATP = L-phenylalanyl-tRNA(Phe) + AMP + diphosphate + H(+)</text>
        <dbReference type="Rhea" id="RHEA:19413"/>
        <dbReference type="Rhea" id="RHEA-COMP:9668"/>
        <dbReference type="Rhea" id="RHEA-COMP:9699"/>
        <dbReference type="ChEBI" id="CHEBI:15378"/>
        <dbReference type="ChEBI" id="CHEBI:30616"/>
        <dbReference type="ChEBI" id="CHEBI:33019"/>
        <dbReference type="ChEBI" id="CHEBI:58095"/>
        <dbReference type="ChEBI" id="CHEBI:78442"/>
        <dbReference type="ChEBI" id="CHEBI:78531"/>
        <dbReference type="ChEBI" id="CHEBI:456215"/>
        <dbReference type="EC" id="6.1.1.20"/>
    </reaction>
    <physiologicalReaction direction="left-to-right" evidence="3">
        <dbReference type="Rhea" id="RHEA:19414"/>
    </physiologicalReaction>
</comment>
<comment type="cofactor">
    <cofactor evidence="1">
        <name>Mg(2+)</name>
        <dbReference type="ChEBI" id="CHEBI:18420"/>
    </cofactor>
</comment>
<comment type="subunit">
    <text evidence="3">Heterotetramer; dimer of two heterodimers formed by FARSA and FARSB.</text>
</comment>
<comment type="subcellular location">
    <subcellularLocation>
        <location evidence="4">Cytoplasm</location>
    </subcellularLocation>
</comment>
<comment type="similarity">
    <text evidence="5">Belongs to the class-II aminoacyl-tRNA synthetase family. Phe-tRNA synthetase alpha subunit type 2 subfamily.</text>
</comment>
<keyword id="KW-0007">Acetylation</keyword>
<keyword id="KW-0030">Aminoacyl-tRNA synthetase</keyword>
<keyword id="KW-0067">ATP-binding</keyword>
<keyword id="KW-0963">Cytoplasm</keyword>
<keyword id="KW-0903">Direct protein sequencing</keyword>
<keyword id="KW-0436">Ligase</keyword>
<keyword id="KW-0460">Magnesium</keyword>
<keyword id="KW-0479">Metal-binding</keyword>
<keyword id="KW-0547">Nucleotide-binding</keyword>
<keyword id="KW-0597">Phosphoprotein</keyword>
<keyword id="KW-0648">Protein biosynthesis</keyword>
<keyword id="KW-1185">Reference proteome</keyword>
<gene>
    <name type="primary">Farsa</name>
    <name type="synonym">Farsla</name>
</gene>
<organism>
    <name type="scientific">Rattus norvegicus</name>
    <name type="common">Rat</name>
    <dbReference type="NCBI Taxonomy" id="10116"/>
    <lineage>
        <taxon>Eukaryota</taxon>
        <taxon>Metazoa</taxon>
        <taxon>Chordata</taxon>
        <taxon>Craniata</taxon>
        <taxon>Vertebrata</taxon>
        <taxon>Euteleostomi</taxon>
        <taxon>Mammalia</taxon>
        <taxon>Eutheria</taxon>
        <taxon>Euarchontoglires</taxon>
        <taxon>Glires</taxon>
        <taxon>Rodentia</taxon>
        <taxon>Myomorpha</taxon>
        <taxon>Muroidea</taxon>
        <taxon>Muridae</taxon>
        <taxon>Murinae</taxon>
        <taxon>Rattus</taxon>
    </lineage>
</organism>
<reference key="1">
    <citation type="journal article" date="2004" name="Genome Res.">
        <title>The status, quality, and expansion of the NIH full-length cDNA project: the Mammalian Gene Collection (MGC).</title>
        <authorList>
            <consortium name="The MGC Project Team"/>
        </authorList>
    </citation>
    <scope>NUCLEOTIDE SEQUENCE [LARGE SCALE MRNA]</scope>
    <source>
        <tissue>Brain</tissue>
    </source>
</reference>
<reference key="2">
    <citation type="submission" date="2007-09" db="UniProtKB">
        <authorList>
            <person name="Lubec G."/>
            <person name="Kang S.U."/>
            <person name="Lubec S."/>
        </authorList>
    </citation>
    <scope>PROTEIN SEQUENCE OF 2-12 AND 43-59</scope>
    <scope>IDENTIFICATION BY MASS SPECTROMETRY</scope>
    <source>
        <strain>Sprague-Dawley</strain>
        <tissue>Brain</tissue>
    </source>
</reference>
<reference key="3">
    <citation type="journal article" date="1985" name="Exp. Cell Res.">
        <title>Association of an aminoacyl-tRNA synthetase complex and of phenylalanyl-tRNA synthetase with the cytoskeletal framework fraction from mammalian cells.</title>
        <authorList>
            <person name="Mirande M."/>
            <person name="Le Corre D."/>
            <person name="Louvard D."/>
            <person name="Reggio H."/>
            <person name="Pailliez J.P."/>
            <person name="Waller J.P."/>
        </authorList>
    </citation>
    <scope>SUBCELLULAR LOCATION</scope>
</reference>
<feature type="initiator methionine" description="Removed" evidence="3">
    <location>
        <position position="1"/>
    </location>
</feature>
<feature type="chain" id="PRO_0000280449" description="Phenylalanine--tRNA ligase alpha subunit">
    <location>
        <begin position="2"/>
        <end position="508"/>
    </location>
</feature>
<feature type="binding site" evidence="3">
    <location>
        <position position="329"/>
    </location>
    <ligand>
        <name>L-phenylalanine</name>
        <dbReference type="ChEBI" id="CHEBI:58095"/>
    </ligand>
</feature>
<feature type="binding site" evidence="3">
    <location>
        <begin position="372"/>
        <end position="374"/>
    </location>
    <ligand>
        <name>L-phenylalanine</name>
        <dbReference type="ChEBI" id="CHEBI:58095"/>
    </ligand>
</feature>
<feature type="binding site" evidence="3">
    <location>
        <position position="412"/>
    </location>
    <ligand>
        <name>L-phenylalanine</name>
        <dbReference type="ChEBI" id="CHEBI:58095"/>
    </ligand>
</feature>
<feature type="binding site" evidence="1">
    <location>
        <position position="414"/>
    </location>
    <ligand>
        <name>Mg(2+)</name>
        <dbReference type="ChEBI" id="CHEBI:18420"/>
        <note>shared with beta subunit</note>
    </ligand>
</feature>
<feature type="binding site" evidence="3">
    <location>
        <position position="438"/>
    </location>
    <ligand>
        <name>L-phenylalanine</name>
        <dbReference type="ChEBI" id="CHEBI:58095"/>
    </ligand>
</feature>
<feature type="modified residue" description="N-acetylalanine" evidence="3">
    <location>
        <position position="2"/>
    </location>
</feature>
<feature type="modified residue" description="Phosphoserine" evidence="3">
    <location>
        <position position="193"/>
    </location>
</feature>
<feature type="modified residue" description="Phosphoserine" evidence="2">
    <location>
        <position position="301"/>
    </location>
</feature>
<feature type="modified residue" description="N6-acetyllysine" evidence="3">
    <location>
        <position position="311"/>
    </location>
</feature>
<protein>
    <recommendedName>
        <fullName>Phenylalanine--tRNA ligase alpha subunit</fullName>
        <ecNumber evidence="3">6.1.1.20</ecNumber>
    </recommendedName>
    <alternativeName>
        <fullName>Phenylalanyl-tRNA synthetase alpha subunit</fullName>
        <shortName>PheRS</shortName>
    </alternativeName>
</protein>